<reference key="1">
    <citation type="journal article" date="2005" name="Nucleic Acids Res.">
        <title>Genome dynamics and diversity of Shigella species, the etiologic agents of bacillary dysentery.</title>
        <authorList>
            <person name="Yang F."/>
            <person name="Yang J."/>
            <person name="Zhang X."/>
            <person name="Chen L."/>
            <person name="Jiang Y."/>
            <person name="Yan Y."/>
            <person name="Tang X."/>
            <person name="Wang J."/>
            <person name="Xiong Z."/>
            <person name="Dong J."/>
            <person name="Xue Y."/>
            <person name="Zhu Y."/>
            <person name="Xu X."/>
            <person name="Sun L."/>
            <person name="Chen S."/>
            <person name="Nie H."/>
            <person name="Peng J."/>
            <person name="Xu J."/>
            <person name="Wang Y."/>
            <person name="Yuan Z."/>
            <person name="Wen Y."/>
            <person name="Yao Z."/>
            <person name="Shen Y."/>
            <person name="Qiang B."/>
            <person name="Hou Y."/>
            <person name="Yu J."/>
            <person name="Jin Q."/>
        </authorList>
    </citation>
    <scope>NUCLEOTIDE SEQUENCE [LARGE SCALE GENOMIC DNA]</scope>
    <source>
        <strain>Sb227</strain>
    </source>
</reference>
<evidence type="ECO:0000255" key="1">
    <source>
        <dbReference type="HAMAP-Rule" id="MF_01855"/>
    </source>
</evidence>
<protein>
    <recommendedName>
        <fullName evidence="1">Fructose-1,6-bisphosphatase class 1</fullName>
        <shortName evidence="1">FBPase class 1</shortName>
        <ecNumber evidence="1">3.1.3.11</ecNumber>
    </recommendedName>
    <alternativeName>
        <fullName evidence="1">D-fructose-1,6-bisphosphate 1-phosphohydrolase class 1</fullName>
    </alternativeName>
</protein>
<organism>
    <name type="scientific">Shigella boydii serotype 4 (strain Sb227)</name>
    <dbReference type="NCBI Taxonomy" id="300268"/>
    <lineage>
        <taxon>Bacteria</taxon>
        <taxon>Pseudomonadati</taxon>
        <taxon>Pseudomonadota</taxon>
        <taxon>Gammaproteobacteria</taxon>
        <taxon>Enterobacterales</taxon>
        <taxon>Enterobacteriaceae</taxon>
        <taxon>Shigella</taxon>
    </lineage>
</organism>
<keyword id="KW-0119">Carbohydrate metabolism</keyword>
<keyword id="KW-0963">Cytoplasm</keyword>
<keyword id="KW-0378">Hydrolase</keyword>
<keyword id="KW-0460">Magnesium</keyword>
<keyword id="KW-0479">Metal-binding</keyword>
<accession>Q31TG8</accession>
<dbReference type="EC" id="3.1.3.11" evidence="1"/>
<dbReference type="EMBL" id="CP000036">
    <property type="protein sequence ID" value="ABB68640.1"/>
    <property type="molecule type" value="Genomic_DNA"/>
</dbReference>
<dbReference type="RefSeq" id="WP_000853753.1">
    <property type="nucleotide sequence ID" value="NC_007613.1"/>
</dbReference>
<dbReference type="SMR" id="Q31TG8"/>
<dbReference type="GeneID" id="86861371"/>
<dbReference type="KEGG" id="sbo:SBO_4214"/>
<dbReference type="HOGENOM" id="CLU_039977_2_2_6"/>
<dbReference type="UniPathway" id="UPA00138"/>
<dbReference type="Proteomes" id="UP000007067">
    <property type="component" value="Chromosome"/>
</dbReference>
<dbReference type="GO" id="GO:0005829">
    <property type="term" value="C:cytosol"/>
    <property type="evidence" value="ECO:0007669"/>
    <property type="project" value="TreeGrafter"/>
</dbReference>
<dbReference type="GO" id="GO:0042132">
    <property type="term" value="F:fructose 1,6-bisphosphate 1-phosphatase activity"/>
    <property type="evidence" value="ECO:0007669"/>
    <property type="project" value="UniProtKB-UniRule"/>
</dbReference>
<dbReference type="GO" id="GO:0000287">
    <property type="term" value="F:magnesium ion binding"/>
    <property type="evidence" value="ECO:0007669"/>
    <property type="project" value="UniProtKB-UniRule"/>
</dbReference>
<dbReference type="GO" id="GO:0030388">
    <property type="term" value="P:fructose 1,6-bisphosphate metabolic process"/>
    <property type="evidence" value="ECO:0007669"/>
    <property type="project" value="TreeGrafter"/>
</dbReference>
<dbReference type="GO" id="GO:0006002">
    <property type="term" value="P:fructose 6-phosphate metabolic process"/>
    <property type="evidence" value="ECO:0007669"/>
    <property type="project" value="TreeGrafter"/>
</dbReference>
<dbReference type="GO" id="GO:0006000">
    <property type="term" value="P:fructose metabolic process"/>
    <property type="evidence" value="ECO:0007669"/>
    <property type="project" value="TreeGrafter"/>
</dbReference>
<dbReference type="GO" id="GO:0006094">
    <property type="term" value="P:gluconeogenesis"/>
    <property type="evidence" value="ECO:0007669"/>
    <property type="project" value="UniProtKB-UniRule"/>
</dbReference>
<dbReference type="GO" id="GO:0005986">
    <property type="term" value="P:sucrose biosynthetic process"/>
    <property type="evidence" value="ECO:0007669"/>
    <property type="project" value="TreeGrafter"/>
</dbReference>
<dbReference type="CDD" id="cd00354">
    <property type="entry name" value="FBPase"/>
    <property type="match status" value="1"/>
</dbReference>
<dbReference type="FunFam" id="3.30.540.10:FF:000002">
    <property type="entry name" value="Fructose-1,6-bisphosphatase class 1"/>
    <property type="match status" value="1"/>
</dbReference>
<dbReference type="FunFam" id="3.40.190.80:FF:000001">
    <property type="entry name" value="Fructose-1,6-bisphosphatase class 1"/>
    <property type="match status" value="1"/>
</dbReference>
<dbReference type="Gene3D" id="3.40.190.80">
    <property type="match status" value="1"/>
</dbReference>
<dbReference type="Gene3D" id="3.30.540.10">
    <property type="entry name" value="Fructose-1,6-Bisphosphatase, subunit A, domain 1"/>
    <property type="match status" value="1"/>
</dbReference>
<dbReference type="HAMAP" id="MF_01855">
    <property type="entry name" value="FBPase_class1"/>
    <property type="match status" value="1"/>
</dbReference>
<dbReference type="InterPro" id="IPR044015">
    <property type="entry name" value="FBPase_C_dom"/>
</dbReference>
<dbReference type="InterPro" id="IPR000146">
    <property type="entry name" value="FBPase_class-1"/>
</dbReference>
<dbReference type="InterPro" id="IPR033391">
    <property type="entry name" value="FBPase_N"/>
</dbReference>
<dbReference type="InterPro" id="IPR028343">
    <property type="entry name" value="FBPtase"/>
</dbReference>
<dbReference type="InterPro" id="IPR020548">
    <property type="entry name" value="Fructose_bisphosphatase_AS"/>
</dbReference>
<dbReference type="NCBIfam" id="NF006778">
    <property type="entry name" value="PRK09293.1-1"/>
    <property type="match status" value="1"/>
</dbReference>
<dbReference type="NCBIfam" id="NF006779">
    <property type="entry name" value="PRK09293.1-3"/>
    <property type="match status" value="1"/>
</dbReference>
<dbReference type="PANTHER" id="PTHR11556">
    <property type="entry name" value="FRUCTOSE-1,6-BISPHOSPHATASE-RELATED"/>
    <property type="match status" value="1"/>
</dbReference>
<dbReference type="PANTHER" id="PTHR11556:SF35">
    <property type="entry name" value="SEDOHEPTULOSE-1,7-BISPHOSPHATASE, CHLOROPLASTIC"/>
    <property type="match status" value="1"/>
</dbReference>
<dbReference type="Pfam" id="PF00316">
    <property type="entry name" value="FBPase"/>
    <property type="match status" value="1"/>
</dbReference>
<dbReference type="Pfam" id="PF18913">
    <property type="entry name" value="FBPase_C"/>
    <property type="match status" value="1"/>
</dbReference>
<dbReference type="PIRSF" id="PIRSF500210">
    <property type="entry name" value="FBPtase"/>
    <property type="match status" value="1"/>
</dbReference>
<dbReference type="PIRSF" id="PIRSF000904">
    <property type="entry name" value="FBPtase_SBPase"/>
    <property type="match status" value="1"/>
</dbReference>
<dbReference type="PRINTS" id="PR00115">
    <property type="entry name" value="F16BPHPHTASE"/>
</dbReference>
<dbReference type="SUPFAM" id="SSF56655">
    <property type="entry name" value="Carbohydrate phosphatase"/>
    <property type="match status" value="1"/>
</dbReference>
<dbReference type="PROSITE" id="PS00124">
    <property type="entry name" value="FBPASE"/>
    <property type="match status" value="1"/>
</dbReference>
<sequence length="332" mass="36834">MKTLGEFIVEKQHEFSHATGELTALLSAIKLGAKIIHRDINKAGLVDILGASGAENVQGEVQQKLDLFANEKLKAALKARDIVAGIASEEEDEIVVFEGCEHAKYVVLMDPLDGSSNIDVNVSVGTIFSIYRRVTPVGTPVTEEDFLQPGNKQVAAGYVVYGSSTMLVYTTGCGVHAFTYDPSLGVFCLCQERMRFPEKGKTYSINEGNYIKFPNGVKKYIKFCQEEDKSTNRPYTSRYIGSLVADFHRNLLKGGIYLYPSTASHPDGKLRLLYECNPMAFLAEQAGGKASDGKERILDIIPETLHQRRSFFVGNDHMVEDVERFIREFPDA</sequence>
<feature type="chain" id="PRO_0000364717" description="Fructose-1,6-bisphosphatase class 1">
    <location>
        <begin position="1"/>
        <end position="332"/>
    </location>
</feature>
<feature type="binding site" evidence="1">
    <location>
        <position position="89"/>
    </location>
    <ligand>
        <name>Mg(2+)</name>
        <dbReference type="ChEBI" id="CHEBI:18420"/>
        <label>1</label>
    </ligand>
</feature>
<feature type="binding site" evidence="1">
    <location>
        <position position="110"/>
    </location>
    <ligand>
        <name>Mg(2+)</name>
        <dbReference type="ChEBI" id="CHEBI:18420"/>
        <label>1</label>
    </ligand>
</feature>
<feature type="binding site" evidence="1">
    <location>
        <position position="110"/>
    </location>
    <ligand>
        <name>Mg(2+)</name>
        <dbReference type="ChEBI" id="CHEBI:18420"/>
        <label>2</label>
    </ligand>
</feature>
<feature type="binding site" evidence="1">
    <location>
        <position position="112"/>
    </location>
    <ligand>
        <name>Mg(2+)</name>
        <dbReference type="ChEBI" id="CHEBI:18420"/>
        <label>1</label>
    </ligand>
</feature>
<feature type="binding site" evidence="1">
    <location>
        <begin position="113"/>
        <end position="116"/>
    </location>
    <ligand>
        <name>substrate</name>
    </ligand>
</feature>
<feature type="binding site" evidence="1">
    <location>
        <position position="113"/>
    </location>
    <ligand>
        <name>Mg(2+)</name>
        <dbReference type="ChEBI" id="CHEBI:18420"/>
        <label>2</label>
    </ligand>
</feature>
<feature type="binding site" evidence="1">
    <location>
        <position position="206"/>
    </location>
    <ligand>
        <name>substrate</name>
    </ligand>
</feature>
<feature type="binding site" evidence="1">
    <location>
        <position position="239"/>
    </location>
    <ligand>
        <name>substrate</name>
    </ligand>
</feature>
<feature type="binding site" evidence="1">
    <location>
        <begin position="257"/>
        <end position="259"/>
    </location>
    <ligand>
        <name>substrate</name>
    </ligand>
</feature>
<feature type="binding site" evidence="1">
    <location>
        <position position="269"/>
    </location>
    <ligand>
        <name>substrate</name>
    </ligand>
</feature>
<feature type="binding site" evidence="1">
    <location>
        <position position="275"/>
    </location>
    <ligand>
        <name>Mg(2+)</name>
        <dbReference type="ChEBI" id="CHEBI:18420"/>
        <label>2</label>
    </ligand>
</feature>
<comment type="catalytic activity">
    <reaction evidence="1">
        <text>beta-D-fructose 1,6-bisphosphate + H2O = beta-D-fructose 6-phosphate + phosphate</text>
        <dbReference type="Rhea" id="RHEA:11064"/>
        <dbReference type="ChEBI" id="CHEBI:15377"/>
        <dbReference type="ChEBI" id="CHEBI:32966"/>
        <dbReference type="ChEBI" id="CHEBI:43474"/>
        <dbReference type="ChEBI" id="CHEBI:57634"/>
        <dbReference type="EC" id="3.1.3.11"/>
    </reaction>
</comment>
<comment type="cofactor">
    <cofactor evidence="1">
        <name>Mg(2+)</name>
        <dbReference type="ChEBI" id="CHEBI:18420"/>
    </cofactor>
    <text evidence="1">Binds 2 magnesium ions per subunit.</text>
</comment>
<comment type="pathway">
    <text evidence="1">Carbohydrate biosynthesis; gluconeogenesis.</text>
</comment>
<comment type="subunit">
    <text evidence="1">Homotetramer.</text>
</comment>
<comment type="subcellular location">
    <subcellularLocation>
        <location evidence="1">Cytoplasm</location>
    </subcellularLocation>
</comment>
<comment type="similarity">
    <text evidence="1">Belongs to the FBPase class 1 family.</text>
</comment>
<gene>
    <name evidence="1" type="primary">fbp</name>
    <name type="ordered locus">SBO_4214</name>
</gene>
<name>F16PA_SHIBS</name>
<proteinExistence type="inferred from homology"/>